<comment type="function">
    <text evidence="1">UDP-glucuronosyltransferases catalyze phase II biotransformation reactions in which lipophilic substrates are conjugated with glucuronic acid to increase water solubility and enhance excretion. They are of major importance in the conjugation and subsequent elimination of potentially toxic xenobiotics and endogenous compounds (By similarity).</text>
</comment>
<comment type="catalytic activity">
    <reaction>
        <text>glucuronate acceptor + UDP-alpha-D-glucuronate = acceptor beta-D-glucuronoside + UDP + H(+)</text>
        <dbReference type="Rhea" id="RHEA:21032"/>
        <dbReference type="ChEBI" id="CHEBI:15378"/>
        <dbReference type="ChEBI" id="CHEBI:58052"/>
        <dbReference type="ChEBI" id="CHEBI:58223"/>
        <dbReference type="ChEBI" id="CHEBI:132367"/>
        <dbReference type="ChEBI" id="CHEBI:132368"/>
        <dbReference type="EC" id="2.4.1.17"/>
    </reaction>
</comment>
<comment type="subcellular location">
    <subcellularLocation>
        <location evidence="4">Membrane</location>
        <topology evidence="4">Single-pass type I membrane protein</topology>
    </subcellularLocation>
</comment>
<comment type="tissue specificity">
    <text evidence="3">Highly expressed in kidney, while it is expressed at low levels in liver. Not detected in other tissues examined.</text>
</comment>
<comment type="similarity">
    <text evidence="4">Belongs to the UDP-glycosyltransferase family.</text>
</comment>
<proteinExistence type="evidence at protein level"/>
<dbReference type="EC" id="2.4.1.17"/>
<dbReference type="EMBL" id="AK050128">
    <property type="protein sequence ID" value="BAC34080.1"/>
    <property type="molecule type" value="mRNA"/>
</dbReference>
<dbReference type="EMBL" id="AK143815">
    <property type="protein sequence ID" value="BAE25548.1"/>
    <property type="molecule type" value="mRNA"/>
</dbReference>
<dbReference type="EMBL" id="BC022134">
    <property type="protein sequence ID" value="AAH22134.1"/>
    <property type="molecule type" value="mRNA"/>
</dbReference>
<dbReference type="EMBL" id="BC024453">
    <property type="protein sequence ID" value="AAH24453.1"/>
    <property type="molecule type" value="mRNA"/>
</dbReference>
<dbReference type="EMBL" id="BC034837">
    <property type="protein sequence ID" value="AAH34837.1"/>
    <property type="molecule type" value="mRNA"/>
</dbReference>
<dbReference type="CCDS" id="CCDS27375.1"/>
<dbReference type="RefSeq" id="NP_659094.1">
    <property type="nucleotide sequence ID" value="NM_144845.3"/>
</dbReference>
<dbReference type="SMR" id="Q8JZZ0"/>
<dbReference type="FunCoup" id="Q8JZZ0">
    <property type="interactions" value="77"/>
</dbReference>
<dbReference type="STRING" id="10090.ENSMUSP00000072236"/>
<dbReference type="CAZy" id="GT1">
    <property type="family name" value="Glycosyltransferase Family 1"/>
</dbReference>
<dbReference type="GlyCosmos" id="Q8JZZ0">
    <property type="glycosylation" value="1 site, No reported glycans"/>
</dbReference>
<dbReference type="GlyGen" id="Q8JZZ0">
    <property type="glycosylation" value="2 sites, 1 N-linked glycan (1 site), 1 O-linked glycan (1 site)"/>
</dbReference>
<dbReference type="iPTMnet" id="Q8JZZ0"/>
<dbReference type="PhosphoSitePlus" id="Q8JZZ0"/>
<dbReference type="SwissPalm" id="Q8JZZ0"/>
<dbReference type="jPOST" id="Q8JZZ0"/>
<dbReference type="PaxDb" id="10090-ENSMUSP00000072236"/>
<dbReference type="PeptideAtlas" id="Q8JZZ0"/>
<dbReference type="ProteomicsDB" id="297803"/>
<dbReference type="DNASU" id="223337"/>
<dbReference type="Ensembl" id="ENSMUST00000072403.7">
    <property type="protein sequence ID" value="ENSMUSP00000072236.7"/>
    <property type="gene ID" value="ENSMUSG00000049152.12"/>
</dbReference>
<dbReference type="GeneID" id="223337"/>
<dbReference type="KEGG" id="mmu:223337"/>
<dbReference type="UCSC" id="uc007vfl.1">
    <property type="organism name" value="mouse"/>
</dbReference>
<dbReference type="AGR" id="MGI:2145969"/>
<dbReference type="CTD" id="133688"/>
<dbReference type="MGI" id="MGI:2145969">
    <property type="gene designation" value="Ugt3a2"/>
</dbReference>
<dbReference type="VEuPathDB" id="HostDB:ENSMUSG00000049152"/>
<dbReference type="eggNOG" id="KOG1192">
    <property type="taxonomic scope" value="Eukaryota"/>
</dbReference>
<dbReference type="GeneTree" id="ENSGT00940000161263"/>
<dbReference type="HOGENOM" id="CLU_012949_3_2_1"/>
<dbReference type="InParanoid" id="Q8JZZ0"/>
<dbReference type="OMA" id="YASFQRP"/>
<dbReference type="OrthoDB" id="5835829at2759"/>
<dbReference type="PhylomeDB" id="Q8JZZ0"/>
<dbReference type="TreeFam" id="TF315472"/>
<dbReference type="Reactome" id="R-MMU-156588">
    <property type="pathway name" value="Glucuronidation"/>
</dbReference>
<dbReference type="Reactome" id="R-MMU-9749641">
    <property type="pathway name" value="Aspirin ADME"/>
</dbReference>
<dbReference type="BioGRID-ORCS" id="223337">
    <property type="hits" value="2 hits in 77 CRISPR screens"/>
</dbReference>
<dbReference type="ChiTaRS" id="Ugt3a2">
    <property type="organism name" value="mouse"/>
</dbReference>
<dbReference type="PRO" id="PR:Q8JZZ0"/>
<dbReference type="Proteomes" id="UP000000589">
    <property type="component" value="Chromosome 15"/>
</dbReference>
<dbReference type="RNAct" id="Q8JZZ0">
    <property type="molecule type" value="protein"/>
</dbReference>
<dbReference type="Bgee" id="ENSMUSG00000049152">
    <property type="expression patterns" value="Expressed in right kidney and 26 other cell types or tissues"/>
</dbReference>
<dbReference type="GO" id="GO:0016020">
    <property type="term" value="C:membrane"/>
    <property type="evidence" value="ECO:0007669"/>
    <property type="project" value="UniProtKB-SubCell"/>
</dbReference>
<dbReference type="GO" id="GO:0015020">
    <property type="term" value="F:glucuronosyltransferase activity"/>
    <property type="evidence" value="ECO:0007669"/>
    <property type="project" value="UniProtKB-EC"/>
</dbReference>
<dbReference type="GO" id="GO:0008194">
    <property type="term" value="F:UDP-glycosyltransferase activity"/>
    <property type="evidence" value="ECO:0000314"/>
    <property type="project" value="MGI"/>
</dbReference>
<dbReference type="GO" id="GO:0071412">
    <property type="term" value="P:cellular response to genistein"/>
    <property type="evidence" value="ECO:0000266"/>
    <property type="project" value="MGI"/>
</dbReference>
<dbReference type="CDD" id="cd03784">
    <property type="entry name" value="GT1_Gtf-like"/>
    <property type="match status" value="1"/>
</dbReference>
<dbReference type="FunFam" id="3.40.50.2000:FF:000094">
    <property type="entry name" value="UDP-glucuronosyltransferase"/>
    <property type="match status" value="1"/>
</dbReference>
<dbReference type="FunFam" id="3.40.50.2000:FF:000155">
    <property type="entry name" value="UDP-glucuronosyltransferase"/>
    <property type="match status" value="1"/>
</dbReference>
<dbReference type="Gene3D" id="3.40.50.2000">
    <property type="entry name" value="Glycogen Phosphorylase B"/>
    <property type="match status" value="2"/>
</dbReference>
<dbReference type="InterPro" id="IPR050271">
    <property type="entry name" value="UDP-glycosyltransferase"/>
</dbReference>
<dbReference type="InterPro" id="IPR002213">
    <property type="entry name" value="UDP_glucos_trans"/>
</dbReference>
<dbReference type="InterPro" id="IPR035595">
    <property type="entry name" value="UDP_glycos_trans_CS"/>
</dbReference>
<dbReference type="PANTHER" id="PTHR48043">
    <property type="entry name" value="EG:EG0003.4 PROTEIN-RELATED"/>
    <property type="match status" value="1"/>
</dbReference>
<dbReference type="PANTHER" id="PTHR48043:SF24">
    <property type="entry name" value="UDP-GLUCURONOSYLTRANSFERASE 3A2"/>
    <property type="match status" value="1"/>
</dbReference>
<dbReference type="Pfam" id="PF00201">
    <property type="entry name" value="UDPGT"/>
    <property type="match status" value="1"/>
</dbReference>
<dbReference type="SUPFAM" id="SSF53756">
    <property type="entry name" value="UDP-Glycosyltransferase/glycogen phosphorylase"/>
    <property type="match status" value="1"/>
</dbReference>
<dbReference type="PROSITE" id="PS00375">
    <property type="entry name" value="UDPGT"/>
    <property type="match status" value="1"/>
</dbReference>
<gene>
    <name type="primary">Ugt3a2</name>
</gene>
<accession>Q8JZZ0</accession>
<accession>A1A4B4</accession>
<accession>Q3UP49</accession>
<accession>Q8VC11</accession>
<reference key="1">
    <citation type="journal article" date="2005" name="Science">
        <title>The transcriptional landscape of the mammalian genome.</title>
        <authorList>
            <person name="Carninci P."/>
            <person name="Kasukawa T."/>
            <person name="Katayama S."/>
            <person name="Gough J."/>
            <person name="Frith M.C."/>
            <person name="Maeda N."/>
            <person name="Oyama R."/>
            <person name="Ravasi T."/>
            <person name="Lenhard B."/>
            <person name="Wells C."/>
            <person name="Kodzius R."/>
            <person name="Shimokawa K."/>
            <person name="Bajic V.B."/>
            <person name="Brenner S.E."/>
            <person name="Batalov S."/>
            <person name="Forrest A.R."/>
            <person name="Zavolan M."/>
            <person name="Davis M.J."/>
            <person name="Wilming L.G."/>
            <person name="Aidinis V."/>
            <person name="Allen J.E."/>
            <person name="Ambesi-Impiombato A."/>
            <person name="Apweiler R."/>
            <person name="Aturaliya R.N."/>
            <person name="Bailey T.L."/>
            <person name="Bansal M."/>
            <person name="Baxter L."/>
            <person name="Beisel K.W."/>
            <person name="Bersano T."/>
            <person name="Bono H."/>
            <person name="Chalk A.M."/>
            <person name="Chiu K.P."/>
            <person name="Choudhary V."/>
            <person name="Christoffels A."/>
            <person name="Clutterbuck D.R."/>
            <person name="Crowe M.L."/>
            <person name="Dalla E."/>
            <person name="Dalrymple B.P."/>
            <person name="de Bono B."/>
            <person name="Della Gatta G."/>
            <person name="di Bernardo D."/>
            <person name="Down T."/>
            <person name="Engstrom P."/>
            <person name="Fagiolini M."/>
            <person name="Faulkner G."/>
            <person name="Fletcher C.F."/>
            <person name="Fukushima T."/>
            <person name="Furuno M."/>
            <person name="Futaki S."/>
            <person name="Gariboldi M."/>
            <person name="Georgii-Hemming P."/>
            <person name="Gingeras T.R."/>
            <person name="Gojobori T."/>
            <person name="Green R.E."/>
            <person name="Gustincich S."/>
            <person name="Harbers M."/>
            <person name="Hayashi Y."/>
            <person name="Hensch T.K."/>
            <person name="Hirokawa N."/>
            <person name="Hill D."/>
            <person name="Huminiecki L."/>
            <person name="Iacono M."/>
            <person name="Ikeo K."/>
            <person name="Iwama A."/>
            <person name="Ishikawa T."/>
            <person name="Jakt M."/>
            <person name="Kanapin A."/>
            <person name="Katoh M."/>
            <person name="Kawasawa Y."/>
            <person name="Kelso J."/>
            <person name="Kitamura H."/>
            <person name="Kitano H."/>
            <person name="Kollias G."/>
            <person name="Krishnan S.P."/>
            <person name="Kruger A."/>
            <person name="Kummerfeld S.K."/>
            <person name="Kurochkin I.V."/>
            <person name="Lareau L.F."/>
            <person name="Lazarevic D."/>
            <person name="Lipovich L."/>
            <person name="Liu J."/>
            <person name="Liuni S."/>
            <person name="McWilliam S."/>
            <person name="Madan Babu M."/>
            <person name="Madera M."/>
            <person name="Marchionni L."/>
            <person name="Matsuda H."/>
            <person name="Matsuzawa S."/>
            <person name="Miki H."/>
            <person name="Mignone F."/>
            <person name="Miyake S."/>
            <person name="Morris K."/>
            <person name="Mottagui-Tabar S."/>
            <person name="Mulder N."/>
            <person name="Nakano N."/>
            <person name="Nakauchi H."/>
            <person name="Ng P."/>
            <person name="Nilsson R."/>
            <person name="Nishiguchi S."/>
            <person name="Nishikawa S."/>
            <person name="Nori F."/>
            <person name="Ohara O."/>
            <person name="Okazaki Y."/>
            <person name="Orlando V."/>
            <person name="Pang K.C."/>
            <person name="Pavan W.J."/>
            <person name="Pavesi G."/>
            <person name="Pesole G."/>
            <person name="Petrovsky N."/>
            <person name="Piazza S."/>
            <person name="Reed J."/>
            <person name="Reid J.F."/>
            <person name="Ring B.Z."/>
            <person name="Ringwald M."/>
            <person name="Rost B."/>
            <person name="Ruan Y."/>
            <person name="Salzberg S.L."/>
            <person name="Sandelin A."/>
            <person name="Schneider C."/>
            <person name="Schoenbach C."/>
            <person name="Sekiguchi K."/>
            <person name="Semple C.A."/>
            <person name="Seno S."/>
            <person name="Sessa L."/>
            <person name="Sheng Y."/>
            <person name="Shibata Y."/>
            <person name="Shimada H."/>
            <person name="Shimada K."/>
            <person name="Silva D."/>
            <person name="Sinclair B."/>
            <person name="Sperling S."/>
            <person name="Stupka E."/>
            <person name="Sugiura K."/>
            <person name="Sultana R."/>
            <person name="Takenaka Y."/>
            <person name="Taki K."/>
            <person name="Tammoja K."/>
            <person name="Tan S.L."/>
            <person name="Tang S."/>
            <person name="Taylor M.S."/>
            <person name="Tegner J."/>
            <person name="Teichmann S.A."/>
            <person name="Ueda H.R."/>
            <person name="van Nimwegen E."/>
            <person name="Verardo R."/>
            <person name="Wei C.L."/>
            <person name="Yagi K."/>
            <person name="Yamanishi H."/>
            <person name="Zabarovsky E."/>
            <person name="Zhu S."/>
            <person name="Zimmer A."/>
            <person name="Hide W."/>
            <person name="Bult C."/>
            <person name="Grimmond S.M."/>
            <person name="Teasdale R.D."/>
            <person name="Liu E.T."/>
            <person name="Brusic V."/>
            <person name="Quackenbush J."/>
            <person name="Wahlestedt C."/>
            <person name="Mattick J.S."/>
            <person name="Hume D.A."/>
            <person name="Kai C."/>
            <person name="Sasaki D."/>
            <person name="Tomaru Y."/>
            <person name="Fukuda S."/>
            <person name="Kanamori-Katayama M."/>
            <person name="Suzuki M."/>
            <person name="Aoki J."/>
            <person name="Arakawa T."/>
            <person name="Iida J."/>
            <person name="Imamura K."/>
            <person name="Itoh M."/>
            <person name="Kato T."/>
            <person name="Kawaji H."/>
            <person name="Kawagashira N."/>
            <person name="Kawashima T."/>
            <person name="Kojima M."/>
            <person name="Kondo S."/>
            <person name="Konno H."/>
            <person name="Nakano K."/>
            <person name="Ninomiya N."/>
            <person name="Nishio T."/>
            <person name="Okada M."/>
            <person name="Plessy C."/>
            <person name="Shibata K."/>
            <person name="Shiraki T."/>
            <person name="Suzuki S."/>
            <person name="Tagami M."/>
            <person name="Waki K."/>
            <person name="Watahiki A."/>
            <person name="Okamura-Oho Y."/>
            <person name="Suzuki H."/>
            <person name="Kawai J."/>
            <person name="Hayashizaki Y."/>
        </authorList>
    </citation>
    <scope>NUCLEOTIDE SEQUENCE [LARGE SCALE MRNA]</scope>
    <source>
        <strain>C57BL/6J</strain>
        <tissue>Liver</tissue>
        <tissue>Spleen</tissue>
    </source>
</reference>
<reference key="2">
    <citation type="journal article" date="2004" name="Genome Res.">
        <title>The status, quality, and expansion of the NIH full-length cDNA project: the Mammalian Gene Collection (MGC).</title>
        <authorList>
            <consortium name="The MGC Project Team"/>
        </authorList>
    </citation>
    <scope>NUCLEOTIDE SEQUENCE [LARGE SCALE MRNA]</scope>
    <source>
        <strain>FVB/N</strain>
        <tissue>Kidney</tissue>
        <tissue>Liver</tissue>
    </source>
</reference>
<reference key="3">
    <citation type="journal article" date="2007" name="Drug Metab. Dispos.">
        <title>Tissue- and gender-specific mRNA expression of UDP-glucuronosyltransferases (UGTs) in mice.</title>
        <authorList>
            <person name="Buckley D.B."/>
            <person name="Klaassen C.D."/>
        </authorList>
    </citation>
    <scope>TISSUE SPECIFICITY</scope>
</reference>
<reference key="4">
    <citation type="journal article" date="2010" name="Cell">
        <title>A tissue-specific atlas of mouse protein phosphorylation and expression.</title>
        <authorList>
            <person name="Huttlin E.L."/>
            <person name="Jedrychowski M.P."/>
            <person name="Elias J.E."/>
            <person name="Goswami T."/>
            <person name="Rad R."/>
            <person name="Beausoleil S.A."/>
            <person name="Villen J."/>
            <person name="Haas W."/>
            <person name="Sowa M.E."/>
            <person name="Gygi S.P."/>
        </authorList>
    </citation>
    <scope>IDENTIFICATION BY MASS SPECTROMETRY [LARGE SCALE ANALYSIS]</scope>
    <source>
        <tissue>Kidney</tissue>
        <tissue>Liver</tissue>
    </source>
</reference>
<sequence length="523" mass="59673">MAAHRRWLLMSFLFLEVILLEAAKILTISTLSASHYIVISRVSQVLHEGGHNVTKLLYESANIPDFRKEKPSYQVINWRPPEDQEKKFADLRHRLTEEITYGRSKHHTLLKIHQYFGDLCSQLLSRKDIMDFLKNENFDLVLLDSMDLCSLLIVEKLGKRFVSFLPFQFSYMDFGLPSAPLSYAPVYGSGLTDQMDFWGRVKNFLMFLDFSMKQREILSQYDSTIQEHFVEGSQPVLSDLLLKAELWFVNSDFALDFARPLFPNTVYVGGLLDKPVQPIPQDLENFISQFGDSGFVLVALGSIVSMIQSKEIIKEMNSAFAHLPQGVLWTCKTSHWPKDVSLAPNVKIMDWLPQTDLLAHPSIRLFVTHGGMNSVMEAVHHGVPMVGIPFFFDQPENMVRVEAKNLGVSIQLQTLKAESFALTMKKIIEDKRYKSAAMASKIIRHSHPLTPAQRLLGWIDHILQTGGAAHLKPYAFQQPWHEQYMLDVFLFLLGLMLGTLWLSVKVLVAVTRYLSIATKVKEA</sequence>
<keyword id="KW-0325">Glycoprotein</keyword>
<keyword id="KW-0328">Glycosyltransferase</keyword>
<keyword id="KW-0472">Membrane</keyword>
<keyword id="KW-1185">Reference proteome</keyword>
<keyword id="KW-0732">Signal</keyword>
<keyword id="KW-0808">Transferase</keyword>
<keyword id="KW-0812">Transmembrane</keyword>
<keyword id="KW-1133">Transmembrane helix</keyword>
<evidence type="ECO:0000250" key="1"/>
<evidence type="ECO:0000255" key="2"/>
<evidence type="ECO:0000269" key="3">
    <source>
    </source>
</evidence>
<evidence type="ECO:0000305" key="4"/>
<name>UD3A2_MOUSE</name>
<feature type="signal peptide" evidence="2">
    <location>
        <begin position="1"/>
        <end position="22"/>
    </location>
</feature>
<feature type="chain" id="PRO_0000299154" description="UDP-glucuronosyltransferase 3A2">
    <location>
        <begin position="23"/>
        <end position="523"/>
    </location>
</feature>
<feature type="topological domain" description="Extracellular" evidence="2">
    <location>
        <begin position="23"/>
        <end position="487"/>
    </location>
</feature>
<feature type="transmembrane region" description="Helical" evidence="2">
    <location>
        <begin position="488"/>
        <end position="508"/>
    </location>
</feature>
<feature type="topological domain" description="Cytoplasmic" evidence="2">
    <location>
        <begin position="509"/>
        <end position="523"/>
    </location>
</feature>
<feature type="glycosylation site" description="N-linked (GlcNAc...) asparagine" evidence="2">
    <location>
        <position position="52"/>
    </location>
</feature>
<feature type="sequence conflict" description="In Ref. 1; BAE25548." evidence="4" ref="1">
    <original>S</original>
    <variation>G</variation>
    <location>
        <position position="121"/>
    </location>
</feature>
<feature type="sequence conflict" description="In Ref. 2; AAH34837." evidence="4" ref="2">
    <original>P</original>
    <variation>S</variation>
    <location>
        <position position="344"/>
    </location>
</feature>
<protein>
    <recommendedName>
        <fullName>UDP-glucuronosyltransferase 3A2</fullName>
        <shortName>UDPGT 3A2</shortName>
        <ecNumber>2.4.1.17</ecNumber>
    </recommendedName>
</protein>
<organism>
    <name type="scientific">Mus musculus</name>
    <name type="common">Mouse</name>
    <dbReference type="NCBI Taxonomy" id="10090"/>
    <lineage>
        <taxon>Eukaryota</taxon>
        <taxon>Metazoa</taxon>
        <taxon>Chordata</taxon>
        <taxon>Craniata</taxon>
        <taxon>Vertebrata</taxon>
        <taxon>Euteleostomi</taxon>
        <taxon>Mammalia</taxon>
        <taxon>Eutheria</taxon>
        <taxon>Euarchontoglires</taxon>
        <taxon>Glires</taxon>
        <taxon>Rodentia</taxon>
        <taxon>Myomorpha</taxon>
        <taxon>Muroidea</taxon>
        <taxon>Muridae</taxon>
        <taxon>Murinae</taxon>
        <taxon>Mus</taxon>
        <taxon>Mus</taxon>
    </lineage>
</organism>